<reference key="1">
    <citation type="journal article" date="2010" name="BMC Genomics">
        <title>A genomic perspective on the potential of Actinobacillus succinogenes for industrial succinate production.</title>
        <authorList>
            <person name="McKinlay J.B."/>
            <person name="Laivenieks M."/>
            <person name="Schindler B.D."/>
            <person name="McKinlay A.A."/>
            <person name="Siddaramappa S."/>
            <person name="Challacombe J.F."/>
            <person name="Lowry S.R."/>
            <person name="Clum A."/>
            <person name="Lapidus A.L."/>
            <person name="Burkhart K.B."/>
            <person name="Harkins V."/>
            <person name="Vieille C."/>
        </authorList>
    </citation>
    <scope>NUCLEOTIDE SEQUENCE [LARGE SCALE GENOMIC DNA]</scope>
    <source>
        <strain>ATCC 55618 / DSM 22257 / CCUG 43843 / 130Z</strain>
    </source>
</reference>
<proteinExistence type="inferred from homology"/>
<organism>
    <name type="scientific">Actinobacillus succinogenes (strain ATCC 55618 / DSM 22257 / CCUG 43843 / 130Z)</name>
    <dbReference type="NCBI Taxonomy" id="339671"/>
    <lineage>
        <taxon>Bacteria</taxon>
        <taxon>Pseudomonadati</taxon>
        <taxon>Pseudomonadota</taxon>
        <taxon>Gammaproteobacteria</taxon>
        <taxon>Pasteurellales</taxon>
        <taxon>Pasteurellaceae</taxon>
        <taxon>Actinobacillus</taxon>
    </lineage>
</organism>
<accession>A6VQJ7</accession>
<feature type="chain" id="PRO_1000072264" description="3-hydroxyacyl-[acyl-carrier-protein] dehydratase FabZ">
    <location>
        <begin position="1"/>
        <end position="150"/>
    </location>
</feature>
<feature type="active site" evidence="1">
    <location>
        <position position="57"/>
    </location>
</feature>
<gene>
    <name evidence="1" type="primary">fabZ</name>
    <name type="ordered locus">Asuc_1895</name>
</gene>
<sequence>MTTENRTPRIIEAKEIMTLLPHRFPFLLVDRVVDFQEGEWLKAIKNISVNEPCFTGHFPNEPILPGVLILEALAQSMGLLAFKTHEIQGGELFYFAGIDDARFKRPVLPGDQMELYVEVIKERRGITSFIGRATVNGEVACEAKLMCARR</sequence>
<protein>
    <recommendedName>
        <fullName evidence="1">3-hydroxyacyl-[acyl-carrier-protein] dehydratase FabZ</fullName>
        <ecNumber evidence="1">4.2.1.59</ecNumber>
    </recommendedName>
    <alternativeName>
        <fullName evidence="1">(3R)-hydroxymyristoyl-[acyl-carrier-protein] dehydratase</fullName>
        <shortName evidence="1">(3R)-hydroxymyristoyl-ACP dehydrase</shortName>
    </alternativeName>
    <alternativeName>
        <fullName evidence="1">Beta-hydroxyacyl-ACP dehydratase</fullName>
    </alternativeName>
</protein>
<dbReference type="EC" id="4.2.1.59" evidence="1"/>
<dbReference type="EMBL" id="CP000746">
    <property type="protein sequence ID" value="ABR75244.1"/>
    <property type="molecule type" value="Genomic_DNA"/>
</dbReference>
<dbReference type="RefSeq" id="WP_012073621.1">
    <property type="nucleotide sequence ID" value="NC_009655.1"/>
</dbReference>
<dbReference type="SMR" id="A6VQJ7"/>
<dbReference type="STRING" id="339671.Asuc_1895"/>
<dbReference type="GeneID" id="93226286"/>
<dbReference type="KEGG" id="asu:Asuc_1895"/>
<dbReference type="eggNOG" id="COG0764">
    <property type="taxonomic scope" value="Bacteria"/>
</dbReference>
<dbReference type="HOGENOM" id="CLU_078912_1_0_6"/>
<dbReference type="Proteomes" id="UP000001114">
    <property type="component" value="Chromosome"/>
</dbReference>
<dbReference type="GO" id="GO:0005737">
    <property type="term" value="C:cytoplasm"/>
    <property type="evidence" value="ECO:0007669"/>
    <property type="project" value="UniProtKB-SubCell"/>
</dbReference>
<dbReference type="GO" id="GO:0016020">
    <property type="term" value="C:membrane"/>
    <property type="evidence" value="ECO:0007669"/>
    <property type="project" value="GOC"/>
</dbReference>
<dbReference type="GO" id="GO:0019171">
    <property type="term" value="F:(3R)-hydroxyacyl-[acyl-carrier-protein] dehydratase activity"/>
    <property type="evidence" value="ECO:0007669"/>
    <property type="project" value="UniProtKB-EC"/>
</dbReference>
<dbReference type="GO" id="GO:0006633">
    <property type="term" value="P:fatty acid biosynthetic process"/>
    <property type="evidence" value="ECO:0007669"/>
    <property type="project" value="UniProtKB-UniRule"/>
</dbReference>
<dbReference type="GO" id="GO:0009245">
    <property type="term" value="P:lipid A biosynthetic process"/>
    <property type="evidence" value="ECO:0007669"/>
    <property type="project" value="UniProtKB-UniRule"/>
</dbReference>
<dbReference type="CDD" id="cd01288">
    <property type="entry name" value="FabZ"/>
    <property type="match status" value="1"/>
</dbReference>
<dbReference type="FunFam" id="3.10.129.10:FF:000001">
    <property type="entry name" value="3-hydroxyacyl-[acyl-carrier-protein] dehydratase FabZ"/>
    <property type="match status" value="1"/>
</dbReference>
<dbReference type="Gene3D" id="3.10.129.10">
    <property type="entry name" value="Hotdog Thioesterase"/>
    <property type="match status" value="1"/>
</dbReference>
<dbReference type="HAMAP" id="MF_00406">
    <property type="entry name" value="FabZ"/>
    <property type="match status" value="1"/>
</dbReference>
<dbReference type="InterPro" id="IPR013114">
    <property type="entry name" value="FabA_FabZ"/>
</dbReference>
<dbReference type="InterPro" id="IPR010084">
    <property type="entry name" value="FabZ"/>
</dbReference>
<dbReference type="InterPro" id="IPR029069">
    <property type="entry name" value="HotDog_dom_sf"/>
</dbReference>
<dbReference type="NCBIfam" id="TIGR01750">
    <property type="entry name" value="fabZ"/>
    <property type="match status" value="1"/>
</dbReference>
<dbReference type="NCBIfam" id="NF000582">
    <property type="entry name" value="PRK00006.1"/>
    <property type="match status" value="1"/>
</dbReference>
<dbReference type="PANTHER" id="PTHR30272">
    <property type="entry name" value="3-HYDROXYACYL-[ACYL-CARRIER-PROTEIN] DEHYDRATASE"/>
    <property type="match status" value="1"/>
</dbReference>
<dbReference type="PANTHER" id="PTHR30272:SF1">
    <property type="entry name" value="3-HYDROXYACYL-[ACYL-CARRIER-PROTEIN] DEHYDRATASE"/>
    <property type="match status" value="1"/>
</dbReference>
<dbReference type="Pfam" id="PF07977">
    <property type="entry name" value="FabA"/>
    <property type="match status" value="1"/>
</dbReference>
<dbReference type="SUPFAM" id="SSF54637">
    <property type="entry name" value="Thioesterase/thiol ester dehydrase-isomerase"/>
    <property type="match status" value="1"/>
</dbReference>
<name>FABZ_ACTSZ</name>
<keyword id="KW-0963">Cytoplasm</keyword>
<keyword id="KW-0441">Lipid A biosynthesis</keyword>
<keyword id="KW-0444">Lipid biosynthesis</keyword>
<keyword id="KW-0443">Lipid metabolism</keyword>
<keyword id="KW-0456">Lyase</keyword>
<keyword id="KW-1185">Reference proteome</keyword>
<evidence type="ECO:0000255" key="1">
    <source>
        <dbReference type="HAMAP-Rule" id="MF_00406"/>
    </source>
</evidence>
<comment type="function">
    <text evidence="1">Involved in unsaturated fatty acids biosynthesis. Catalyzes the dehydration of short chain beta-hydroxyacyl-ACPs and long chain saturated and unsaturated beta-hydroxyacyl-ACPs.</text>
</comment>
<comment type="catalytic activity">
    <reaction evidence="1">
        <text>a (3R)-hydroxyacyl-[ACP] = a (2E)-enoyl-[ACP] + H2O</text>
        <dbReference type="Rhea" id="RHEA:13097"/>
        <dbReference type="Rhea" id="RHEA-COMP:9925"/>
        <dbReference type="Rhea" id="RHEA-COMP:9945"/>
        <dbReference type="ChEBI" id="CHEBI:15377"/>
        <dbReference type="ChEBI" id="CHEBI:78784"/>
        <dbReference type="ChEBI" id="CHEBI:78827"/>
        <dbReference type="EC" id="4.2.1.59"/>
    </reaction>
</comment>
<comment type="subcellular location">
    <subcellularLocation>
        <location evidence="1">Cytoplasm</location>
    </subcellularLocation>
</comment>
<comment type="similarity">
    <text evidence="1">Belongs to the thioester dehydratase family. FabZ subfamily.</text>
</comment>